<gene>
    <name evidence="1" type="primary">glpK</name>
    <name type="ordered locus">LBF_1269</name>
</gene>
<accession>B0SG67</accession>
<dbReference type="EC" id="2.7.1.30" evidence="1"/>
<dbReference type="EMBL" id="CP000777">
    <property type="protein sequence ID" value="ABZ93791.1"/>
    <property type="molecule type" value="Genomic_DNA"/>
</dbReference>
<dbReference type="RefSeq" id="WP_012388314.1">
    <property type="nucleotide sequence ID" value="NC_010842.1"/>
</dbReference>
<dbReference type="SMR" id="B0SG67"/>
<dbReference type="KEGG" id="lbf:LBF_1269"/>
<dbReference type="HOGENOM" id="CLU_009281_2_3_12"/>
<dbReference type="UniPathway" id="UPA00618">
    <property type="reaction ID" value="UER00672"/>
</dbReference>
<dbReference type="GO" id="GO:0005829">
    <property type="term" value="C:cytosol"/>
    <property type="evidence" value="ECO:0007669"/>
    <property type="project" value="TreeGrafter"/>
</dbReference>
<dbReference type="GO" id="GO:0005524">
    <property type="term" value="F:ATP binding"/>
    <property type="evidence" value="ECO:0007669"/>
    <property type="project" value="UniProtKB-UniRule"/>
</dbReference>
<dbReference type="GO" id="GO:0004370">
    <property type="term" value="F:glycerol kinase activity"/>
    <property type="evidence" value="ECO:0000250"/>
    <property type="project" value="UniProtKB"/>
</dbReference>
<dbReference type="GO" id="GO:0019563">
    <property type="term" value="P:glycerol catabolic process"/>
    <property type="evidence" value="ECO:0007669"/>
    <property type="project" value="UniProtKB-UniRule"/>
</dbReference>
<dbReference type="GO" id="GO:0006071">
    <property type="term" value="P:glycerol metabolic process"/>
    <property type="evidence" value="ECO:0000250"/>
    <property type="project" value="UniProtKB"/>
</dbReference>
<dbReference type="GO" id="GO:0006072">
    <property type="term" value="P:glycerol-3-phosphate metabolic process"/>
    <property type="evidence" value="ECO:0007669"/>
    <property type="project" value="InterPro"/>
</dbReference>
<dbReference type="CDD" id="cd07786">
    <property type="entry name" value="FGGY_EcGK_like"/>
    <property type="match status" value="1"/>
</dbReference>
<dbReference type="FunFam" id="3.30.420.40:FF:000007">
    <property type="entry name" value="Glycerol kinase"/>
    <property type="match status" value="1"/>
</dbReference>
<dbReference type="FunFam" id="3.30.420.40:FF:000008">
    <property type="entry name" value="Glycerol kinase"/>
    <property type="match status" value="1"/>
</dbReference>
<dbReference type="Gene3D" id="3.30.420.40">
    <property type="match status" value="2"/>
</dbReference>
<dbReference type="HAMAP" id="MF_00186">
    <property type="entry name" value="Glycerol_kin"/>
    <property type="match status" value="1"/>
</dbReference>
<dbReference type="InterPro" id="IPR043129">
    <property type="entry name" value="ATPase_NBD"/>
</dbReference>
<dbReference type="InterPro" id="IPR000577">
    <property type="entry name" value="Carb_kinase_FGGY"/>
</dbReference>
<dbReference type="InterPro" id="IPR018483">
    <property type="entry name" value="Carb_kinase_FGGY_CS"/>
</dbReference>
<dbReference type="InterPro" id="IPR018485">
    <property type="entry name" value="FGGY_C"/>
</dbReference>
<dbReference type="InterPro" id="IPR018484">
    <property type="entry name" value="FGGY_N"/>
</dbReference>
<dbReference type="InterPro" id="IPR005999">
    <property type="entry name" value="Glycerol_kin"/>
</dbReference>
<dbReference type="NCBIfam" id="TIGR01311">
    <property type="entry name" value="glycerol_kin"/>
    <property type="match status" value="1"/>
</dbReference>
<dbReference type="NCBIfam" id="NF000756">
    <property type="entry name" value="PRK00047.1"/>
    <property type="match status" value="1"/>
</dbReference>
<dbReference type="PANTHER" id="PTHR10196:SF69">
    <property type="entry name" value="GLYCEROL KINASE"/>
    <property type="match status" value="1"/>
</dbReference>
<dbReference type="PANTHER" id="PTHR10196">
    <property type="entry name" value="SUGAR KINASE"/>
    <property type="match status" value="1"/>
</dbReference>
<dbReference type="Pfam" id="PF02782">
    <property type="entry name" value="FGGY_C"/>
    <property type="match status" value="1"/>
</dbReference>
<dbReference type="Pfam" id="PF00370">
    <property type="entry name" value="FGGY_N"/>
    <property type="match status" value="1"/>
</dbReference>
<dbReference type="PIRSF" id="PIRSF000538">
    <property type="entry name" value="GlpK"/>
    <property type="match status" value="1"/>
</dbReference>
<dbReference type="SUPFAM" id="SSF53067">
    <property type="entry name" value="Actin-like ATPase domain"/>
    <property type="match status" value="2"/>
</dbReference>
<dbReference type="PROSITE" id="PS00933">
    <property type="entry name" value="FGGY_KINASES_1"/>
    <property type="match status" value="1"/>
</dbReference>
<sequence>MAKKNYIIGIDAGTTGIRTFCFNDKGKVISSAYQEFKQYYPKPGWVEHDPEEIWVKTQKLITLAIKNGKLNPKDAVAIGITNQRETSVVWDKKTGKPVYNAIVWQCRRTSDICKDLKKQSLDSNFRNKTGLVLDAYFSGTKIQWILDNVKGARDRAERGDLLFGTIDTWLLYKLTGHKEHKTDHTNASRTLLFNIQTKEWDEELCKILRVPMSMLPKAFNSKNLFGFTSNVKSIPDGIPISSLVGDQQGALFGQLCTEPGEAKNTYGTGCFLLFNVGDEFRISNQGLITTLALGPEGKTVYCLEGSVFIGGAVVQFLRDNLEFFKYSKDSEKLVKSIKTKDDIVFVPAFAGLGAPHWDQEARGAIFGLSRDTTPAQITRAALKAIALQSYELANAMEKETGKPLKFLRVDGGATSNAWLMQFQADILGTKVIRPQNVDTTVLGAAYLAGLERGFFKSVAHLRKEETKTTQFTPKMKESERKEEIDKWNLAISRVKTET</sequence>
<evidence type="ECO:0000255" key="1">
    <source>
        <dbReference type="HAMAP-Rule" id="MF_00186"/>
    </source>
</evidence>
<keyword id="KW-0067">ATP-binding</keyword>
<keyword id="KW-0319">Glycerol metabolism</keyword>
<keyword id="KW-0418">Kinase</keyword>
<keyword id="KW-0547">Nucleotide-binding</keyword>
<keyword id="KW-0808">Transferase</keyword>
<organism>
    <name type="scientific">Leptospira biflexa serovar Patoc (strain Patoc 1 / Ames)</name>
    <dbReference type="NCBI Taxonomy" id="355278"/>
    <lineage>
        <taxon>Bacteria</taxon>
        <taxon>Pseudomonadati</taxon>
        <taxon>Spirochaetota</taxon>
        <taxon>Spirochaetia</taxon>
        <taxon>Leptospirales</taxon>
        <taxon>Leptospiraceae</taxon>
        <taxon>Leptospira</taxon>
    </lineage>
</organism>
<proteinExistence type="inferred from homology"/>
<reference key="1">
    <citation type="journal article" date="2008" name="PLoS ONE">
        <title>Genome sequence of the saprophyte Leptospira biflexa provides insights into the evolution of Leptospira and the pathogenesis of leptospirosis.</title>
        <authorList>
            <person name="Picardeau M."/>
            <person name="Bulach D.M."/>
            <person name="Bouchier C."/>
            <person name="Zuerner R.L."/>
            <person name="Zidane N."/>
            <person name="Wilson P.J."/>
            <person name="Creno S."/>
            <person name="Kuczek E.S."/>
            <person name="Bommezzadri S."/>
            <person name="Davis J.C."/>
            <person name="McGrath A."/>
            <person name="Johnson M.J."/>
            <person name="Boursaux-Eude C."/>
            <person name="Seemann T."/>
            <person name="Rouy Z."/>
            <person name="Coppel R.L."/>
            <person name="Rood J.I."/>
            <person name="Lajus A."/>
            <person name="Davies J.K."/>
            <person name="Medigue C."/>
            <person name="Adler B."/>
        </authorList>
    </citation>
    <scope>NUCLEOTIDE SEQUENCE [LARGE SCALE GENOMIC DNA]</scope>
    <source>
        <strain>Patoc 1 / Ames</strain>
    </source>
</reference>
<protein>
    <recommendedName>
        <fullName evidence="1">Glycerol kinase</fullName>
        <ecNumber evidence="1">2.7.1.30</ecNumber>
    </recommendedName>
    <alternativeName>
        <fullName evidence="1">ATP:glycerol 3-phosphotransferase</fullName>
    </alternativeName>
    <alternativeName>
        <fullName evidence="1">Glycerokinase</fullName>
        <shortName evidence="1">GK</shortName>
    </alternativeName>
</protein>
<comment type="function">
    <text evidence="1">Key enzyme in the regulation of glycerol uptake and metabolism. Catalyzes the phosphorylation of glycerol to yield sn-glycerol 3-phosphate.</text>
</comment>
<comment type="catalytic activity">
    <reaction evidence="1">
        <text>glycerol + ATP = sn-glycerol 3-phosphate + ADP + H(+)</text>
        <dbReference type="Rhea" id="RHEA:21644"/>
        <dbReference type="ChEBI" id="CHEBI:15378"/>
        <dbReference type="ChEBI" id="CHEBI:17754"/>
        <dbReference type="ChEBI" id="CHEBI:30616"/>
        <dbReference type="ChEBI" id="CHEBI:57597"/>
        <dbReference type="ChEBI" id="CHEBI:456216"/>
        <dbReference type="EC" id="2.7.1.30"/>
    </reaction>
</comment>
<comment type="activity regulation">
    <text evidence="1">Inhibited by fructose 1,6-bisphosphate (FBP).</text>
</comment>
<comment type="pathway">
    <text evidence="1">Polyol metabolism; glycerol degradation via glycerol kinase pathway; sn-glycerol 3-phosphate from glycerol: step 1/1.</text>
</comment>
<comment type="similarity">
    <text evidence="1">Belongs to the FGGY kinase family.</text>
</comment>
<feature type="chain" id="PRO_1000098739" description="Glycerol kinase">
    <location>
        <begin position="1"/>
        <end position="498"/>
    </location>
</feature>
<feature type="binding site" evidence="1">
    <location>
        <position position="14"/>
    </location>
    <ligand>
        <name>ADP</name>
        <dbReference type="ChEBI" id="CHEBI:456216"/>
    </ligand>
</feature>
<feature type="binding site" evidence="1">
    <location>
        <position position="14"/>
    </location>
    <ligand>
        <name>ATP</name>
        <dbReference type="ChEBI" id="CHEBI:30616"/>
    </ligand>
</feature>
<feature type="binding site" evidence="1">
    <location>
        <position position="14"/>
    </location>
    <ligand>
        <name>sn-glycerol 3-phosphate</name>
        <dbReference type="ChEBI" id="CHEBI:57597"/>
    </ligand>
</feature>
<feature type="binding site" evidence="1">
    <location>
        <position position="15"/>
    </location>
    <ligand>
        <name>ATP</name>
        <dbReference type="ChEBI" id="CHEBI:30616"/>
    </ligand>
</feature>
<feature type="binding site" evidence="1">
    <location>
        <position position="18"/>
    </location>
    <ligand>
        <name>ADP</name>
        <dbReference type="ChEBI" id="CHEBI:456216"/>
    </ligand>
</feature>
<feature type="binding site" evidence="1">
    <location>
        <position position="84"/>
    </location>
    <ligand>
        <name>glycerol</name>
        <dbReference type="ChEBI" id="CHEBI:17754"/>
    </ligand>
</feature>
<feature type="binding site" evidence="1">
    <location>
        <position position="84"/>
    </location>
    <ligand>
        <name>sn-glycerol 3-phosphate</name>
        <dbReference type="ChEBI" id="CHEBI:57597"/>
    </ligand>
</feature>
<feature type="binding site" evidence="1">
    <location>
        <position position="85"/>
    </location>
    <ligand>
        <name>glycerol</name>
        <dbReference type="ChEBI" id="CHEBI:17754"/>
    </ligand>
</feature>
<feature type="binding site" evidence="1">
    <location>
        <position position="85"/>
    </location>
    <ligand>
        <name>sn-glycerol 3-phosphate</name>
        <dbReference type="ChEBI" id="CHEBI:57597"/>
    </ligand>
</feature>
<feature type="binding site" evidence="1">
    <location>
        <position position="136"/>
    </location>
    <ligand>
        <name>glycerol</name>
        <dbReference type="ChEBI" id="CHEBI:17754"/>
    </ligand>
</feature>
<feature type="binding site" evidence="1">
    <location>
        <position position="136"/>
    </location>
    <ligand>
        <name>sn-glycerol 3-phosphate</name>
        <dbReference type="ChEBI" id="CHEBI:57597"/>
    </ligand>
</feature>
<feature type="binding site" evidence="1">
    <location>
        <position position="246"/>
    </location>
    <ligand>
        <name>glycerol</name>
        <dbReference type="ChEBI" id="CHEBI:17754"/>
    </ligand>
</feature>
<feature type="binding site" evidence="1">
    <location>
        <position position="246"/>
    </location>
    <ligand>
        <name>sn-glycerol 3-phosphate</name>
        <dbReference type="ChEBI" id="CHEBI:57597"/>
    </ligand>
</feature>
<feature type="binding site" evidence="1">
    <location>
        <position position="247"/>
    </location>
    <ligand>
        <name>glycerol</name>
        <dbReference type="ChEBI" id="CHEBI:17754"/>
    </ligand>
</feature>
<feature type="binding site" evidence="1">
    <location>
        <position position="268"/>
    </location>
    <ligand>
        <name>ADP</name>
        <dbReference type="ChEBI" id="CHEBI:456216"/>
    </ligand>
</feature>
<feature type="binding site" evidence="1">
    <location>
        <position position="268"/>
    </location>
    <ligand>
        <name>ATP</name>
        <dbReference type="ChEBI" id="CHEBI:30616"/>
    </ligand>
</feature>
<feature type="binding site" evidence="1">
    <location>
        <position position="311"/>
    </location>
    <ligand>
        <name>ADP</name>
        <dbReference type="ChEBI" id="CHEBI:456216"/>
    </ligand>
</feature>
<feature type="binding site" evidence="1">
    <location>
        <position position="311"/>
    </location>
    <ligand>
        <name>ATP</name>
        <dbReference type="ChEBI" id="CHEBI:30616"/>
    </ligand>
</feature>
<feature type="binding site" evidence="1">
    <location>
        <position position="315"/>
    </location>
    <ligand>
        <name>ATP</name>
        <dbReference type="ChEBI" id="CHEBI:30616"/>
    </ligand>
</feature>
<feature type="binding site" evidence="1">
    <location>
        <position position="412"/>
    </location>
    <ligand>
        <name>ADP</name>
        <dbReference type="ChEBI" id="CHEBI:456216"/>
    </ligand>
</feature>
<feature type="binding site" evidence="1">
    <location>
        <position position="412"/>
    </location>
    <ligand>
        <name>ATP</name>
        <dbReference type="ChEBI" id="CHEBI:30616"/>
    </ligand>
</feature>
<feature type="binding site" evidence="1">
    <location>
        <position position="416"/>
    </location>
    <ligand>
        <name>ADP</name>
        <dbReference type="ChEBI" id="CHEBI:456216"/>
    </ligand>
</feature>
<name>GLPK_LEPBA</name>